<accession>B7JDU4</accession>
<dbReference type="EC" id="3.1.-.-" evidence="1"/>
<dbReference type="EC" id="5.6.2.4" evidence="1"/>
<dbReference type="EMBL" id="CP001283">
    <property type="protein sequence ID" value="ACK89857.1"/>
    <property type="molecule type" value="Genomic_DNA"/>
</dbReference>
<dbReference type="RefSeq" id="WP_000572289.1">
    <property type="nucleotide sequence ID" value="NC_011773.1"/>
</dbReference>
<dbReference type="SMR" id="B7JDU4"/>
<dbReference type="KEGG" id="bcu:BCAH820_1220"/>
<dbReference type="HOGENOM" id="CLU_001114_3_1_9"/>
<dbReference type="Proteomes" id="UP000001363">
    <property type="component" value="Chromosome"/>
</dbReference>
<dbReference type="GO" id="GO:0005829">
    <property type="term" value="C:cytosol"/>
    <property type="evidence" value="ECO:0007669"/>
    <property type="project" value="TreeGrafter"/>
</dbReference>
<dbReference type="GO" id="GO:0033202">
    <property type="term" value="C:DNA helicase complex"/>
    <property type="evidence" value="ECO:0007669"/>
    <property type="project" value="TreeGrafter"/>
</dbReference>
<dbReference type="GO" id="GO:0043138">
    <property type="term" value="F:3'-5' DNA helicase activity"/>
    <property type="evidence" value="ECO:0007669"/>
    <property type="project" value="UniProtKB-UniRule"/>
</dbReference>
<dbReference type="GO" id="GO:0008408">
    <property type="term" value="F:3'-5' exonuclease activity"/>
    <property type="evidence" value="ECO:0007669"/>
    <property type="project" value="UniProtKB-UniRule"/>
</dbReference>
<dbReference type="GO" id="GO:0005524">
    <property type="term" value="F:ATP binding"/>
    <property type="evidence" value="ECO:0007669"/>
    <property type="project" value="UniProtKB-UniRule"/>
</dbReference>
<dbReference type="GO" id="GO:0016887">
    <property type="term" value="F:ATP hydrolysis activity"/>
    <property type="evidence" value="ECO:0007669"/>
    <property type="project" value="RHEA"/>
</dbReference>
<dbReference type="GO" id="GO:0003690">
    <property type="term" value="F:double-stranded DNA binding"/>
    <property type="evidence" value="ECO:0007669"/>
    <property type="project" value="UniProtKB-UniRule"/>
</dbReference>
<dbReference type="GO" id="GO:0000724">
    <property type="term" value="P:double-strand break repair via homologous recombination"/>
    <property type="evidence" value="ECO:0007669"/>
    <property type="project" value="UniProtKB-UniRule"/>
</dbReference>
<dbReference type="CDD" id="cd18807">
    <property type="entry name" value="SF1_C_UvrD"/>
    <property type="match status" value="1"/>
</dbReference>
<dbReference type="FunFam" id="3.40.50.300:FF:001164">
    <property type="entry name" value="ATP-dependent helicase/nuclease subunit A"/>
    <property type="match status" value="1"/>
</dbReference>
<dbReference type="FunFam" id="3.40.50.300:FF:001187">
    <property type="entry name" value="ATP-dependent helicase/nuclease subunit A"/>
    <property type="match status" value="1"/>
</dbReference>
<dbReference type="FunFam" id="3.40.50.300:FF:001196">
    <property type="entry name" value="ATP-dependent helicase/nuclease subunit A"/>
    <property type="match status" value="1"/>
</dbReference>
<dbReference type="FunFam" id="3.40.50.300:FF:001236">
    <property type="entry name" value="ATP-dependent helicase/nuclease subunit A"/>
    <property type="match status" value="1"/>
</dbReference>
<dbReference type="Gene3D" id="3.90.320.10">
    <property type="match status" value="1"/>
</dbReference>
<dbReference type="Gene3D" id="6.10.250.2380">
    <property type="match status" value="1"/>
</dbReference>
<dbReference type="Gene3D" id="3.40.50.300">
    <property type="entry name" value="P-loop containing nucleotide triphosphate hydrolases"/>
    <property type="match status" value="4"/>
</dbReference>
<dbReference type="HAMAP" id="MF_01451">
    <property type="entry name" value="AddA"/>
    <property type="match status" value="1"/>
</dbReference>
<dbReference type="InterPro" id="IPR014152">
    <property type="entry name" value="AddA"/>
</dbReference>
<dbReference type="InterPro" id="IPR014017">
    <property type="entry name" value="DNA_helicase_UvrD-like_C"/>
</dbReference>
<dbReference type="InterPro" id="IPR000212">
    <property type="entry name" value="DNA_helicase_UvrD/REP"/>
</dbReference>
<dbReference type="InterPro" id="IPR027417">
    <property type="entry name" value="P-loop_NTPase"/>
</dbReference>
<dbReference type="InterPro" id="IPR011604">
    <property type="entry name" value="PDDEXK-like_dom_sf"/>
</dbReference>
<dbReference type="InterPro" id="IPR038726">
    <property type="entry name" value="PDDEXK_AddAB-type"/>
</dbReference>
<dbReference type="InterPro" id="IPR011335">
    <property type="entry name" value="Restrct_endonuc-II-like"/>
</dbReference>
<dbReference type="InterPro" id="IPR014016">
    <property type="entry name" value="UvrD-like_ATP-bd"/>
</dbReference>
<dbReference type="NCBIfam" id="TIGR02785">
    <property type="entry name" value="addA_Gpos"/>
    <property type="match status" value="1"/>
</dbReference>
<dbReference type="PANTHER" id="PTHR11070:SF48">
    <property type="entry name" value="ATP-DEPENDENT HELICASE_NUCLEASE SUBUNIT A"/>
    <property type="match status" value="1"/>
</dbReference>
<dbReference type="PANTHER" id="PTHR11070">
    <property type="entry name" value="UVRD / RECB / PCRA DNA HELICASE FAMILY MEMBER"/>
    <property type="match status" value="1"/>
</dbReference>
<dbReference type="Pfam" id="PF12705">
    <property type="entry name" value="PDDEXK_1"/>
    <property type="match status" value="1"/>
</dbReference>
<dbReference type="Pfam" id="PF00580">
    <property type="entry name" value="UvrD-helicase"/>
    <property type="match status" value="1"/>
</dbReference>
<dbReference type="Pfam" id="PF13361">
    <property type="entry name" value="UvrD_C"/>
    <property type="match status" value="1"/>
</dbReference>
<dbReference type="SUPFAM" id="SSF52540">
    <property type="entry name" value="P-loop containing nucleoside triphosphate hydrolases"/>
    <property type="match status" value="1"/>
</dbReference>
<dbReference type="SUPFAM" id="SSF52980">
    <property type="entry name" value="Restriction endonuclease-like"/>
    <property type="match status" value="1"/>
</dbReference>
<dbReference type="PROSITE" id="PS51198">
    <property type="entry name" value="UVRD_HELICASE_ATP_BIND"/>
    <property type="match status" value="1"/>
</dbReference>
<dbReference type="PROSITE" id="PS51217">
    <property type="entry name" value="UVRD_HELICASE_CTER"/>
    <property type="match status" value="1"/>
</dbReference>
<protein>
    <recommendedName>
        <fullName evidence="1">ATP-dependent helicase/nuclease subunit A</fullName>
        <ecNumber evidence="1">3.1.-.-</ecNumber>
        <ecNumber evidence="1">5.6.2.4</ecNumber>
    </recommendedName>
    <alternativeName>
        <fullName evidence="1">ATP-dependent helicase/nuclease AddA</fullName>
    </alternativeName>
    <alternativeName>
        <fullName evidence="1">DNA 3'-5' helicase AddA</fullName>
    </alternativeName>
</protein>
<reference key="1">
    <citation type="submission" date="2008-10" db="EMBL/GenBank/DDBJ databases">
        <title>Genome sequence of Bacillus cereus AH820.</title>
        <authorList>
            <person name="Dodson R.J."/>
            <person name="Durkin A.S."/>
            <person name="Rosovitz M.J."/>
            <person name="Rasko D.A."/>
            <person name="Hoffmaster A."/>
            <person name="Ravel J."/>
            <person name="Sutton G."/>
        </authorList>
    </citation>
    <scope>NUCLEOTIDE SEQUENCE [LARGE SCALE GENOMIC DNA]</scope>
    <source>
        <strain>AH820</strain>
    </source>
</reference>
<organism>
    <name type="scientific">Bacillus cereus (strain AH820)</name>
    <dbReference type="NCBI Taxonomy" id="405535"/>
    <lineage>
        <taxon>Bacteria</taxon>
        <taxon>Bacillati</taxon>
        <taxon>Bacillota</taxon>
        <taxon>Bacilli</taxon>
        <taxon>Bacillales</taxon>
        <taxon>Bacillaceae</taxon>
        <taxon>Bacillus</taxon>
        <taxon>Bacillus cereus group</taxon>
    </lineage>
</organism>
<sequence>MIENWPKKPEGSQWTDDQWKAVVANGRDILVAAAAGSGKTAVLVERIIKKIINEENPVDVDRLLVVTFTNAAAQEMKNRIGEALEKVLIDEPGSQHVRKQLSLLNKASISTIHSFCLQVIRGYYYMLDVDPRFRIANQTENELLKEEVLDDILEEEYGIEDNTIFFELVDRYTSDRSDDDLQRMILALHTESRAHPNPEKWLDKLVEAYDVEGKTIEDLVYASYLLEDVKFQLETAEQHIRKATELAMLPDGPAPRIETLQADLALFGTLSAAARESWTSVYEAMQNVSWQTLKRIKKSDYNEDIVKQVDSLRNKAKDEVKKLQEELFSRRPESFLRDFQDMHPVLEKLVQLVKVFTERFQAMKRDKGMVDFTDLEHFCLQILSEQSEDGEMKPSAVALQYRNKFAEVLVDEYQDTNFVQESIIKFVTKDSESEGNLFMVGDVKQSIYRFRLAEPGLFLGKYKRFTQEGLGGGMKIDLAKNFRSRHEVLAGTNFIFKQIMGEEVGEIDYDADAELKLGASYPEGEDVAAELLCIQQTEEVIDGEEGAEVEKAQLEARLMAQRIKAMVDSGYEVYDRKTDSMRPVQYRDFVILLRSMPWAPQIMEELKLQGIPVYADLATGYFEATEVNIMMNVFRVIDNPMQDIPLAAVLRSPIVGLNDEELATLRAHGKKGSFYEVMSSFLKGAPLEEEKELHDKLEWFYNLLQGWREFARQQSLSDLIWKVYGETGYYDFVGGLPAGKQRQANLRVLYDRARQYEATSFRGLFRFLRFIERILERGDDMGTARALGEQEDVVRIMTIHKSKGLEFPVVFVAGLGRRFNTQDLMKRFLLHKDFGFGSQFIDPRKRIKYTTLSQLAIKRKMKMELIAEEMRVLYVALTRAKEKLILIGTVKDATKEMEKWLDAREHSEWLLPDHVRAGASCYLDWIAPSLYRHRDSEMLLELGQGSIPDEIYGYDTSWKVEVVDGNTLLAPEPVQEEKQELLEALREKKAVPLESERKEEVYDRLMWKYRYGEATSHRAKQSVTEIKRNYQSEEGSDNAFIKKLRAPIRTRPRFMEKKGLTYAERGTAVHAVMQHVDLKKPITVEVLQEQIAGMVNKELLTFEQAEEIAVEKVISFFDSDLGKRVLAAKSVEREVPFTMMLAAEEAYQDWQGKSGESILVQGVIDCMIEEEDGITLIDFKTDTIEGKFPGGFEQAKPILEERYKVQLSLYAKALEKSLQHPVKEKCLYFFDGNHVIKVEE</sequence>
<name>ADDA_BACC0</name>
<evidence type="ECO:0000255" key="1">
    <source>
        <dbReference type="HAMAP-Rule" id="MF_01451"/>
    </source>
</evidence>
<gene>
    <name evidence="1" type="primary">addA</name>
    <name type="ordered locus">BCAH820_1220</name>
</gene>
<comment type="function">
    <text evidence="1">The heterodimer acts as both an ATP-dependent DNA helicase and an ATP-dependent, dual-direction single-stranded exonuclease. Recognizes the chi site generating a DNA molecule suitable for the initiation of homologous recombination. The AddA nuclease domain is required for chi fragment generation; this subunit has the helicase and 3' -&gt; 5' nuclease activities.</text>
</comment>
<comment type="catalytic activity">
    <reaction evidence="1">
        <text>Couples ATP hydrolysis with the unwinding of duplex DNA by translocating in the 3'-5' direction.</text>
        <dbReference type="EC" id="5.6.2.4"/>
    </reaction>
</comment>
<comment type="catalytic activity">
    <reaction evidence="1">
        <text>ATP + H2O = ADP + phosphate + H(+)</text>
        <dbReference type="Rhea" id="RHEA:13065"/>
        <dbReference type="ChEBI" id="CHEBI:15377"/>
        <dbReference type="ChEBI" id="CHEBI:15378"/>
        <dbReference type="ChEBI" id="CHEBI:30616"/>
        <dbReference type="ChEBI" id="CHEBI:43474"/>
        <dbReference type="ChEBI" id="CHEBI:456216"/>
        <dbReference type="EC" id="5.6.2.4"/>
    </reaction>
</comment>
<comment type="cofactor">
    <cofactor evidence="1">
        <name>Mg(2+)</name>
        <dbReference type="ChEBI" id="CHEBI:18420"/>
    </cofactor>
</comment>
<comment type="subunit">
    <text evidence="1">Heterodimer of AddA and AddB/RexB.</text>
</comment>
<comment type="similarity">
    <text evidence="1">Belongs to the helicase family. AddA subfamily.</text>
</comment>
<proteinExistence type="inferred from homology"/>
<keyword id="KW-0067">ATP-binding</keyword>
<keyword id="KW-0227">DNA damage</keyword>
<keyword id="KW-0234">DNA repair</keyword>
<keyword id="KW-0238">DNA-binding</keyword>
<keyword id="KW-0269">Exonuclease</keyword>
<keyword id="KW-0347">Helicase</keyword>
<keyword id="KW-0378">Hydrolase</keyword>
<keyword id="KW-0413">Isomerase</keyword>
<keyword id="KW-0540">Nuclease</keyword>
<keyword id="KW-0547">Nucleotide-binding</keyword>
<feature type="chain" id="PRO_0000379233" description="ATP-dependent helicase/nuclease subunit A">
    <location>
        <begin position="1"/>
        <end position="1240"/>
    </location>
</feature>
<feature type="domain" description="UvrD-like helicase ATP-binding" evidence="1">
    <location>
        <begin position="12"/>
        <end position="485"/>
    </location>
</feature>
<feature type="domain" description="UvrD-like helicase C-terminal" evidence="1">
    <location>
        <begin position="497"/>
        <end position="804"/>
    </location>
</feature>
<feature type="binding site" evidence="1">
    <location>
        <begin position="33"/>
        <end position="40"/>
    </location>
    <ligand>
        <name>ATP</name>
        <dbReference type="ChEBI" id="CHEBI:30616"/>
    </ligand>
</feature>